<keyword id="KW-0002">3D-structure</keyword>
<keyword id="KW-0067">ATP-binding</keyword>
<keyword id="KW-0997">Cell inner membrane</keyword>
<keyword id="KW-1003">Cell membrane</keyword>
<keyword id="KW-0903">Direct protein sequencing</keyword>
<keyword id="KW-0378">Hydrolase</keyword>
<keyword id="KW-0418">Kinase</keyword>
<keyword id="KW-0460">Magnesium</keyword>
<keyword id="KW-0472">Membrane</keyword>
<keyword id="KW-0479">Metal-binding</keyword>
<keyword id="KW-0547">Nucleotide-binding</keyword>
<keyword id="KW-0597">Phosphoprotein</keyword>
<keyword id="KW-0904">Protein phosphatase</keyword>
<keyword id="KW-1185">Reference proteome</keyword>
<keyword id="KW-0808">Transferase</keyword>
<keyword id="KW-0812">Transmembrane</keyword>
<keyword id="KW-1133">Transmembrane helix</keyword>
<keyword id="KW-0902">Two-component regulatory system</keyword>
<evidence type="ECO:0000250" key="1"/>
<evidence type="ECO:0000255" key="2"/>
<evidence type="ECO:0000255" key="3">
    <source>
        <dbReference type="PROSITE-ProRule" id="PRU00102"/>
    </source>
</evidence>
<evidence type="ECO:0000255" key="4">
    <source>
        <dbReference type="PROSITE-ProRule" id="PRU00107"/>
    </source>
</evidence>
<evidence type="ECO:0000269" key="5">
    <source>
    </source>
</evidence>
<evidence type="ECO:0000269" key="6">
    <source>
    </source>
</evidence>
<evidence type="ECO:0000269" key="7">
    <source>
    </source>
</evidence>
<evidence type="ECO:0000269" key="8">
    <source>
    </source>
</evidence>
<evidence type="ECO:0000269" key="9">
    <source>
    </source>
</evidence>
<evidence type="ECO:0000269" key="10">
    <source>
    </source>
</evidence>
<evidence type="ECO:0000269" key="11">
    <source>
    </source>
</evidence>
<evidence type="ECO:0000269" key="12">
    <source>
    </source>
</evidence>
<evidence type="ECO:0000269" key="13">
    <source>
    </source>
</evidence>
<evidence type="ECO:0000269" key="14">
    <source>
    </source>
</evidence>
<evidence type="ECO:0000269" key="15">
    <source>
    </source>
</evidence>
<evidence type="ECO:0000269" key="16">
    <source>
    </source>
</evidence>
<evidence type="ECO:0000305" key="17"/>
<evidence type="ECO:0007829" key="18">
    <source>
        <dbReference type="PDB" id="1ID0"/>
    </source>
</evidence>
<evidence type="ECO:0007829" key="19">
    <source>
        <dbReference type="PDB" id="3BQA"/>
    </source>
</evidence>
<evidence type="ECO:0007829" key="20">
    <source>
        <dbReference type="PDB" id="6A8U"/>
    </source>
</evidence>
<sequence>MKKLLRLFFPLSLRVRFLLATAAVVLVLSLAYGMVALIGYSVSFDKTTFRLLRGESNLFYTLAKWENNKLHVELPENIDKQSPTMTLIYDENGQLLWAQRDVPWLMKMIQPDWLKSNGFHEIEADVNDTSLLLSGDHSIQQQLQEVREDDDDAEMTHSVAVNVYPATSRMPKLTIVVVDTIPVELKSSYMVWSWFIYVLSANLLLVIPLLWVAAWWSLRPIEALAKEVRELEEHNRELLNPATTRELTSLVRNLNRLLKSERERYDKYRTTLTDLTHSLKTPLAVLQSTLRSLRSEKMSVSDAEPVMLEQISRISQQIGYYLHRASMRGGTLLSRELHPVAPLLDNLTSALNKVYQRKGVNISLDISPEISFVGEQNDFVEVMGNVLDNACKYCLEFVEISARQTDEHLYIVVEDDGPGIPLSKREVIFDRGQRVDTLRPGQGVGLAVAREITEQYEGKIVAGESMLGGARMEVIFGRQHSAPKDE</sequence>
<feature type="chain" id="PRO_0000074837" description="Sensor protein PhoQ">
    <location>
        <begin position="1"/>
        <end position="486"/>
    </location>
</feature>
<feature type="topological domain" description="Cytoplasmic" evidence="2">
    <location>
        <begin position="1"/>
        <end position="16"/>
    </location>
</feature>
<feature type="transmembrane region" description="Helical" evidence="2">
    <location>
        <begin position="17"/>
        <end position="37"/>
    </location>
</feature>
<feature type="topological domain" description="Periplasmic" evidence="2">
    <location>
        <begin position="38"/>
        <end position="194"/>
    </location>
</feature>
<feature type="transmembrane region" description="Helical" evidence="2">
    <location>
        <begin position="195"/>
        <end position="215"/>
    </location>
</feature>
<feature type="topological domain" description="Cytoplasmic" evidence="2">
    <location>
        <begin position="216"/>
        <end position="486"/>
    </location>
</feature>
<feature type="domain" description="HAMP" evidence="3">
    <location>
        <begin position="215"/>
        <end position="266"/>
    </location>
</feature>
<feature type="domain" description="Histidine kinase" evidence="4">
    <location>
        <begin position="274"/>
        <end position="480"/>
    </location>
</feature>
<feature type="binding site">
    <location>
        <position position="151"/>
    </location>
    <ligand>
        <name>a divalent metal cation</name>
        <dbReference type="ChEBI" id="CHEBI:60240"/>
    </ligand>
</feature>
<feature type="binding site">
    <location>
        <position position="152"/>
    </location>
    <ligand>
        <name>a divalent metal cation</name>
        <dbReference type="ChEBI" id="CHEBI:60240"/>
    </ligand>
</feature>
<feature type="binding site">
    <location>
        <begin position="385"/>
        <end position="393"/>
    </location>
    <ligand>
        <name>ATP</name>
        <dbReference type="ChEBI" id="CHEBI:30616"/>
    </ligand>
</feature>
<feature type="binding site">
    <location>
        <position position="385"/>
    </location>
    <ligand>
        <name>Mg(2+)</name>
        <dbReference type="ChEBI" id="CHEBI:18420"/>
    </ligand>
</feature>
<feature type="binding site">
    <location>
        <begin position="415"/>
        <end position="420"/>
    </location>
    <ligand>
        <name>ATP</name>
        <dbReference type="ChEBI" id="CHEBI:30616"/>
    </ligand>
</feature>
<feature type="binding site">
    <location>
        <begin position="434"/>
        <end position="446"/>
    </location>
    <ligand>
        <name>ATP</name>
        <dbReference type="ChEBI" id="CHEBI:30616"/>
    </ligand>
</feature>
<feature type="binding site">
    <location>
        <position position="442"/>
    </location>
    <ligand>
        <name>Mg(2+)</name>
        <dbReference type="ChEBI" id="CHEBI:18420"/>
    </ligand>
</feature>
<feature type="site" description="Plays a critical role in the switching between kinase and phosphatase states">
    <location>
        <position position="202"/>
    </location>
</feature>
<feature type="modified residue" description="Phosphohistidine; by autocatalysis" evidence="4">
    <location>
        <position position="277"/>
    </location>
</feature>
<feature type="mutagenesis site" description="Shows Mg(2+)-dependent signaling and partial gene activation activity; when associated with A-202." evidence="14">
    <original>V</original>
    <variation>N</variation>
    <location>
        <position position="27"/>
    </location>
</feature>
<feature type="mutagenesis site" description="Shows Mg(2+)-dependent signaling and displays higher gene activation activity than wild-type; when associated with A-202." evidence="14">
    <original>L</original>
    <variation>N</variation>
    <location>
        <position position="30"/>
    </location>
</feature>
<feature type="mutagenesis site" description="No significant effect (with or without MgCl(2) or CaCl(2))." evidence="11">
    <original>T</original>
    <variation>L</variation>
    <location>
        <position position="47"/>
    </location>
</feature>
<feature type="mutagenesis site" description="No significant effect (with or without MgCl(2) or CaCl(2))." evidence="7">
    <original>T</original>
    <variation>A</variation>
    <variation>C</variation>
    <variation>E</variation>
    <variation>M</variation>
    <variation>N</variation>
    <variation>Q</variation>
    <variation>S</variation>
    <variation>V</variation>
    <location>
        <position position="48"/>
    </location>
</feature>
<feature type="mutagenesis site" description="Confers less than 30% of the wild-type levels of PhoP/PhoQ-signaling cascade in absence of CaCl(2) or MgCl(2)." evidence="7">
    <original>T</original>
    <variation>D</variation>
    <variation>G</variation>
    <variation>H</variation>
    <variation>I</variation>
    <variation>K</variation>
    <variation>L</variation>
    <variation>P</variation>
    <variation>R</variation>
    <location>
        <position position="48"/>
    </location>
</feature>
<feature type="mutagenesis site" description="Decreased sensitivity to repression by calcium but not by magnesium." evidence="7">
    <original>T</original>
    <variation>F</variation>
    <variation>W</variation>
    <location>
        <position position="48"/>
    </location>
</feature>
<feature type="mutagenesis site" description="Higher activity than wild-type (with or without MgCl(2) or CaCl(2))." evidence="7">
    <original>T</original>
    <variation>Y</variation>
    <location>
        <position position="48"/>
    </location>
</feature>
<feature type="mutagenesis site" description="Large decrease in the transcriptional activation of PhoQ-dependent genes." evidence="12">
    <original>R</original>
    <variation>D</variation>
    <location>
        <position position="50"/>
    </location>
</feature>
<feature type="mutagenesis site" description="Very large decrease in the transcriptional activation of PhoQ-dependent genes." evidence="12">
    <original>G</original>
    <variation>D</variation>
    <location>
        <position position="54"/>
    </location>
</feature>
<feature type="mutagenesis site" description="No significant effect (with or without MgCl(2) or CaCl(2))." evidence="11">
    <original>N</original>
    <variation>L</variation>
    <location>
        <position position="68"/>
    </location>
</feature>
<feature type="mutagenesis site" description="No significant effect (with or without MgCl(2) or CaCl(2))." evidence="11">
    <original>D</original>
    <variation>A</variation>
    <location>
        <position position="90"/>
    </location>
</feature>
<feature type="mutagenesis site" description="Unable to bind divalent cations in vitro and impaired in the ability to respond to Mg(2+) deprivation in vivo." evidence="16">
    <original>EDDDDAE</original>
    <variation>QNNNNAQ</variation>
    <location>
        <begin position="148"/>
        <end position="154"/>
    </location>
</feature>
<feature type="mutagenesis site" description="Wild-type effect concerning mgrB transcription." evidence="11">
    <original>D</original>
    <variation>A</variation>
    <location>
        <position position="149"/>
    </location>
</feature>
<feature type="mutagenesis site" description="Wild-type effect concerning mgrB transcription." evidence="11">
    <original>D</original>
    <variation>I</variation>
    <location>
        <position position="150"/>
    </location>
</feature>
<feature type="mutagenesis site" description="Wild-type effect concerning mgrB transcription." evidence="11">
    <original>D</original>
    <variation>I</variation>
    <location>
        <position position="151"/>
    </location>
</feature>
<feature type="mutagenesis site" description="Wild-type effect concerning mgrB transcription." evidence="11">
    <original>D</original>
    <variation>F</variation>
    <location>
        <position position="152"/>
    </location>
</feature>
<feature type="mutagenesis site" description="Locked-on mutant defective in Mg(2+)-sensing and unable to control its phosphorylation state and phosphotransfer to phoP." evidence="11 12">
    <original>D</original>
    <variation>L</variation>
    <variation>A</variation>
    <location>
        <position position="179"/>
    </location>
</feature>
<feature type="mutagenesis site" description="Very large decrease in the transcriptional activation of PhoQ-dependent genes." evidence="11 12">
    <original>D</original>
    <variation>R</variation>
    <location>
        <position position="179"/>
    </location>
</feature>
<feature type="mutagenesis site" description="Shows Mg(2+)-dependent signaling and partial gene activation activity; when associated with A-202." evidence="14">
    <original>L</original>
    <variation>N</variation>
    <location>
        <position position="199"/>
    </location>
</feature>
<feature type="mutagenesis site" description="Is blind to signal, fails to activate transcription of PhoQ-dependent genes, and abrogates transcription when coexpressed with wild-type PhoQ. Shows no detectable autophosphorylation. Still displays phosphatase activity. Recovers Mg(2+)-dependent signaling and partial gene activation activity; when associated with N-27 or N-199 or N-203 or N-205. Recovers Mg(2+)-dependent signaling and displays higher gene activation activity than wild-type; when associated with N-30." evidence="14">
    <original>N</original>
    <variation>A</variation>
    <location>
        <position position="202"/>
    </location>
</feature>
<feature type="mutagenesis site" description="Is blind to signal, fails to activate transcription of PhoQ-dependent genes, and abrogates transcription when coexpressed with wild-type PhoQ." evidence="14">
    <original>N</original>
    <variation>I</variation>
    <variation>L</variation>
    <variation>M</variation>
    <variation>F</variation>
    <variation>W</variation>
    <variation>Y</variation>
    <variation>V</variation>
    <variation>C</variation>
    <variation>G</variation>
    <variation>P</variation>
    <location>
        <position position="202"/>
    </location>
</feature>
<feature type="mutagenesis site" description="Shows similar activity profile to wild-type." evidence="14">
    <original>N</original>
    <variation>R</variation>
    <variation>D</variation>
    <variation>Q</variation>
    <variation>E</variation>
    <variation>H</variation>
    <location>
        <position position="202"/>
    </location>
</feature>
<feature type="mutagenesis site" description="Shows Mg(2+)-dependent signaling and partial gene activation activity; when associated with A-202." evidence="14">
    <original>L</original>
    <variation>N</variation>
    <location>
        <position position="203"/>
    </location>
</feature>
<feature type="mutagenesis site" description="Shows Mg(2+)-dependent signaling and partial gene activation activity; when associated with A-202." evidence="14">
    <original>L</original>
    <variation>N</variation>
    <location>
        <position position="205"/>
    </location>
</feature>
<feature type="mutagenesis site" description="44-fold decrease in ATP affinity and 6-fold decrease in activity." evidence="6">
    <original>K</original>
    <variation>A</variation>
    <location>
        <position position="392"/>
    </location>
</feature>
<feature type="mutagenesis site" description="2-fold decrease in ATP affinity and 51-fold decrease in activity." evidence="6">
    <original>R</original>
    <variation>A</variation>
    <location>
        <position position="434"/>
    </location>
</feature>
<feature type="mutagenesis site" description="3-fold decrease in ATP affinity and 2-fold increase in activity." evidence="6">
    <original>R</original>
    <variation>A</variation>
    <location>
        <position position="439"/>
    </location>
</feature>
<feature type="helix" evidence="20">
    <location>
        <begin position="45"/>
        <end position="62"/>
    </location>
</feature>
<feature type="strand" evidence="20">
    <location>
        <begin position="64"/>
        <end position="66"/>
    </location>
</feature>
<feature type="strand" evidence="20">
    <location>
        <begin position="69"/>
        <end position="71"/>
    </location>
</feature>
<feature type="helix" evidence="19">
    <location>
        <begin position="76"/>
        <end position="79"/>
    </location>
</feature>
<feature type="strand" evidence="20">
    <location>
        <begin position="84"/>
        <end position="89"/>
    </location>
</feature>
<feature type="strand" evidence="20">
    <location>
        <begin position="95"/>
        <end position="100"/>
    </location>
</feature>
<feature type="helix" evidence="20">
    <location>
        <begin position="103"/>
        <end position="106"/>
    </location>
</feature>
<feature type="helix" evidence="20">
    <location>
        <begin position="111"/>
        <end position="115"/>
    </location>
</feature>
<feature type="strand" evidence="20">
    <location>
        <begin position="118"/>
        <end position="125"/>
    </location>
</feature>
<feature type="helix" evidence="20">
    <location>
        <begin position="126"/>
        <end position="132"/>
    </location>
</feature>
<feature type="turn" evidence="20">
    <location>
        <begin position="133"/>
        <end position="135"/>
    </location>
</feature>
<feature type="helix" evidence="20">
    <location>
        <begin position="137"/>
        <end position="139"/>
    </location>
</feature>
<feature type="helix" evidence="20">
    <location>
        <begin position="140"/>
        <end position="149"/>
    </location>
</feature>
<feature type="strand" evidence="20">
    <location>
        <begin position="154"/>
        <end position="164"/>
    </location>
</feature>
<feature type="strand" evidence="20">
    <location>
        <begin position="168"/>
        <end position="170"/>
    </location>
</feature>
<feature type="strand" evidence="20">
    <location>
        <begin position="173"/>
        <end position="181"/>
    </location>
</feature>
<feature type="helix" evidence="20">
    <location>
        <begin position="183"/>
        <end position="185"/>
    </location>
</feature>
<feature type="strand" evidence="18">
    <location>
        <begin position="337"/>
        <end position="339"/>
    </location>
</feature>
<feature type="helix" evidence="18">
    <location>
        <begin position="340"/>
        <end position="354"/>
    </location>
</feature>
<feature type="turn" evidence="18">
    <location>
        <begin position="355"/>
        <end position="358"/>
    </location>
</feature>
<feature type="strand" evidence="18">
    <location>
        <begin position="361"/>
        <end position="365"/>
    </location>
</feature>
<feature type="strand" evidence="18">
    <location>
        <begin position="371"/>
        <end position="374"/>
    </location>
</feature>
<feature type="helix" evidence="18">
    <location>
        <begin position="376"/>
        <end position="393"/>
    </location>
</feature>
<feature type="strand" evidence="18">
    <location>
        <begin position="395"/>
        <end position="404"/>
    </location>
</feature>
<feature type="strand" evidence="18">
    <location>
        <begin position="409"/>
        <end position="418"/>
    </location>
</feature>
<feature type="helix" evidence="18">
    <location>
        <begin position="422"/>
        <end position="424"/>
    </location>
</feature>
<feature type="helix" evidence="18">
    <location>
        <begin position="427"/>
        <end position="429"/>
    </location>
</feature>
<feature type="helix" evidence="18">
    <location>
        <begin position="446"/>
        <end position="455"/>
    </location>
</feature>
<feature type="strand" evidence="18">
    <location>
        <begin position="459"/>
        <end position="464"/>
    </location>
</feature>
<feature type="strand" evidence="18">
    <location>
        <begin position="468"/>
        <end position="476"/>
    </location>
</feature>
<reference key="1">
    <citation type="journal article" date="1992" name="J. Bacteriol.">
        <title>Molecular analysis of the Escherichia coli phoP-phoQ operon.</title>
        <authorList>
            <person name="Kasahara M."/>
            <person name="Nakata A."/>
            <person name="Shinagawa H."/>
        </authorList>
    </citation>
    <scope>NUCLEOTIDE SEQUENCE [GENOMIC DNA]</scope>
    <source>
        <strain>K12</strain>
    </source>
</reference>
<reference key="2">
    <citation type="journal article" date="1996" name="DNA Res.">
        <title>A 718-kb DNA sequence of the Escherichia coli K-12 genome corresponding to the 12.7-28.0 min region on the linkage map.</title>
        <authorList>
            <person name="Oshima T."/>
            <person name="Aiba H."/>
            <person name="Baba T."/>
            <person name="Fujita K."/>
            <person name="Hayashi K."/>
            <person name="Honjo A."/>
            <person name="Ikemoto K."/>
            <person name="Inada T."/>
            <person name="Itoh T."/>
            <person name="Kajihara M."/>
            <person name="Kanai K."/>
            <person name="Kashimoto K."/>
            <person name="Kimura S."/>
            <person name="Kitagawa M."/>
            <person name="Makino K."/>
            <person name="Masuda S."/>
            <person name="Miki T."/>
            <person name="Mizobuchi K."/>
            <person name="Mori H."/>
            <person name="Motomura K."/>
            <person name="Nakamura Y."/>
            <person name="Nashimoto H."/>
            <person name="Nishio Y."/>
            <person name="Saito N."/>
            <person name="Sampei G."/>
            <person name="Seki Y."/>
            <person name="Tagami H."/>
            <person name="Takemoto K."/>
            <person name="Wada C."/>
            <person name="Yamamoto Y."/>
            <person name="Yano M."/>
            <person name="Horiuchi T."/>
        </authorList>
    </citation>
    <scope>NUCLEOTIDE SEQUENCE [LARGE SCALE GENOMIC DNA]</scope>
    <source>
        <strain>K12 / W3110 / ATCC 27325 / DSM 5911</strain>
    </source>
</reference>
<reference key="3">
    <citation type="journal article" date="1997" name="Science">
        <title>The complete genome sequence of Escherichia coli K-12.</title>
        <authorList>
            <person name="Blattner F.R."/>
            <person name="Plunkett G. III"/>
            <person name="Bloch C.A."/>
            <person name="Perna N.T."/>
            <person name="Burland V."/>
            <person name="Riley M."/>
            <person name="Collado-Vides J."/>
            <person name="Glasner J.D."/>
            <person name="Rode C.K."/>
            <person name="Mayhew G.F."/>
            <person name="Gregor J."/>
            <person name="Davis N.W."/>
            <person name="Kirkpatrick H.A."/>
            <person name="Goeden M.A."/>
            <person name="Rose D.J."/>
            <person name="Mau B."/>
            <person name="Shao Y."/>
        </authorList>
    </citation>
    <scope>NUCLEOTIDE SEQUENCE [LARGE SCALE GENOMIC DNA]</scope>
    <source>
        <strain>K12 / MG1655 / ATCC 47076</strain>
    </source>
</reference>
<reference key="4">
    <citation type="journal article" date="2006" name="Mol. Syst. Biol.">
        <title>Highly accurate genome sequences of Escherichia coli K-12 strains MG1655 and W3110.</title>
        <authorList>
            <person name="Hayashi K."/>
            <person name="Morooka N."/>
            <person name="Yamamoto Y."/>
            <person name="Fujita K."/>
            <person name="Isono K."/>
            <person name="Choi S."/>
            <person name="Ohtsubo E."/>
            <person name="Baba T."/>
            <person name="Wanner B.L."/>
            <person name="Mori H."/>
            <person name="Horiuchi T."/>
        </authorList>
    </citation>
    <scope>NUCLEOTIDE SEQUENCE [LARGE SCALE GENOMIC DNA]</scope>
    <source>
        <strain>K12 / W3110 / ATCC 27325 / DSM 5911</strain>
    </source>
</reference>
<reference key="5">
    <citation type="journal article" date="1992" name="J. Bacteriol.">
        <title>Molecular genetic analysis of the Escherichia coli phoP locus.</title>
        <authorList>
            <person name="Groisman E.A."/>
            <person name="Heffron F."/>
            <person name="Solomon F."/>
        </authorList>
    </citation>
    <scope>NUCLEOTIDE SEQUENCE [GENOMIC DNA] OF 1-22</scope>
    <source>
        <strain>K12</strain>
    </source>
</reference>
<reference key="6">
    <citation type="journal article" date="1996" name="J. Biol. Chem.">
        <title>Signal detection by the PhoQ sensor-transmitter. Characterization of the sensor domain and a response-impaired mutant that identifies ligand-binding determinants.</title>
        <authorList>
            <person name="Waldburger C.D."/>
            <person name="Sauer R.T."/>
        </authorList>
    </citation>
    <scope>PROTEIN SEQUENCE OF 43-190</scope>
    <scope>SECONDARY STRUCTURE OF SENSOR DOMAIN</scope>
    <scope>MUTAGENESIS OF 148-GLU--GLU-154</scope>
    <source>
        <strain>BL21-DE3</strain>
        <strain>K12 / CSH26</strain>
    </source>
</reference>
<reference key="7">
    <citation type="journal article" date="1999" name="J. Bacteriol.">
        <title>Molecular characterization of the PhoP-PhoQ two-component system in Escherichia coli K-12: identification of extracellular Mg2+-responsive promoters.</title>
        <authorList>
            <person name="Kato A."/>
            <person name="Tanabe H."/>
            <person name="Utsumi R."/>
        </authorList>
    </citation>
    <scope>FUNCTION</scope>
    <scope>INDUCTION BY LOW MG(2+)</scope>
    <source>
        <strain>K12 / MC4100 / JA176</strain>
    </source>
</reference>
<reference key="8">
    <citation type="journal article" date="2002" name="J. Bacteriol.">
        <title>Mutational analysis of the Escherichia coli PhoQ sensor kinase: differences with the Salmonella enterica serovar Typhimurium PhoQ protein and in the mechanism of Mg2+ and Ca2+ sensing.</title>
        <authorList>
            <person name="Regelmann A.G."/>
            <person name="Lesley J.A."/>
            <person name="Mott C."/>
            <person name="Stokes L."/>
            <person name="Waldburger C.D."/>
        </authorList>
    </citation>
    <scope>MUTAGENESIS OF SENSOR PERIPLASMIC DOMAIN</scope>
    <scope>MUTAGENESIS OF THR-48</scope>
    <source>
        <strain>K12 / CSH26</strain>
    </source>
</reference>
<reference key="9">
    <citation type="journal article" date="2003" name="J. Bacteriol.">
        <title>Repression of Escherichia coli PhoP-PhoQ signaling by acetate reveals a regulatory role for acetyl coenzyme A.</title>
        <authorList>
            <person name="Lesley J.A."/>
            <person name="Waldburger C.D."/>
        </authorList>
    </citation>
    <scope>ACTIVITY REGULATION</scope>
    <scope>KINETIC PARAMETERS</scope>
    <source>
        <strain>K12 / CSH26</strain>
    </source>
</reference>
<reference key="10">
    <citation type="journal article" date="2003" name="J. Bacteriol.">
        <title>Identification and molecular characterization of the Mg2+ stimulon of Escherichia coli.</title>
        <authorList>
            <person name="Minagawa S."/>
            <person name="Ogasawara H."/>
            <person name="Kato A."/>
            <person name="Yamamoto K."/>
            <person name="Eguchi Y."/>
            <person name="Oshima T."/>
            <person name="Mori H."/>
            <person name="Ishihama A."/>
            <person name="Utsumi R."/>
        </authorList>
    </citation>
    <scope>GENOME-WIDE ANALYSIS</scope>
    <scope>REGULATION BY MG(2+)</scope>
    <source>
        <strain>K12 / MC4100 / JA176</strain>
    </source>
</reference>
<reference key="11">
    <citation type="journal article" date="2003" name="J. Bacteriol.">
        <title>Genome-wide analyses revealing a signaling network of the RcsC-YojN-RcsB phosphorelay system in Escherichia coli.</title>
        <authorList>
            <person name="Hagiwara D."/>
            <person name="Sugiura M."/>
            <person name="Oshima T."/>
            <person name="Mori H."/>
            <person name="Aiba H."/>
            <person name="Yamashino T."/>
            <person name="Mizuno T."/>
        </authorList>
    </citation>
    <scope>GENOME-WIDE ANALYSIS</scope>
    <source>
        <strain>K12 / ST001</strain>
    </source>
</reference>
<reference key="12">
    <citation type="journal article" date="2004" name="J. Bacteriol.">
        <title>Signal transduction cascade between EvgA/EvgS and PhoP/PhoQ two-component systems of Escherichia coli.</title>
        <authorList>
            <person name="Eguchi Y."/>
            <person name="Okada T."/>
            <person name="Minagawa S."/>
            <person name="Oshima T."/>
            <person name="Mori H."/>
            <person name="Yamamoto K."/>
            <person name="Ishihama A."/>
            <person name="Utsumi R."/>
        </authorList>
    </citation>
    <scope>INTERACTION WITH EVGA/EVGS</scope>
    <source>
        <strain>K12 / MC4100 / JA176</strain>
    </source>
</reference>
<reference key="13">
    <citation type="journal article" date="2005" name="Biosci. Biotechnol. Biochem.">
        <title>Isolation and molecular characterization of the locked-on mutant of Mg(2+) sensor PhoQ in Escherichia coli.</title>
        <authorList>
            <person name="Minagawa S."/>
            <person name="Okura R."/>
            <person name="Tsuchitani H."/>
            <person name="Hirao K."/>
            <person name="Yamamoto K."/>
            <person name="Utsumi R."/>
        </authorList>
    </citation>
    <scope>MUTAGENESIS OF THR-47; ASN-68; ASP-90; ASP-149; ASP-150; ASP-151; ASP-152 AND ASP-179</scope>
    <source>
        <strain>BL21-DE3</strain>
        <strain>K12 / MC4100 / ATCC 35695 / DSM 6574</strain>
    </source>
</reference>
<reference key="14">
    <citation type="journal article" date="2005" name="Proc. Natl. Acad. Sci. U.S.A.">
        <title>Dissecting the PhoP regulatory network of Escherichia coli and Salmonella enterica.</title>
        <authorList>
            <person name="Zwir I."/>
            <person name="Shin D."/>
            <person name="Kato A."/>
            <person name="Nishino K."/>
            <person name="Latifi T."/>
            <person name="Solomon F."/>
            <person name="Hare J.M."/>
            <person name="Huang H."/>
            <person name="Groisman E.A."/>
        </authorList>
    </citation>
    <scope>REGULATION OF ACID RESISTANCE GENES</scope>
    <source>
        <strain>K12 / MG1655 / ATCC 47076</strain>
    </source>
</reference>
<reference key="15">
    <citation type="journal article" date="2005" name="Science">
        <title>Global topology analysis of the Escherichia coli inner membrane proteome.</title>
        <authorList>
            <person name="Daley D.O."/>
            <person name="Rapp M."/>
            <person name="Granseth E."/>
            <person name="Melen K."/>
            <person name="Drew D."/>
            <person name="von Heijne G."/>
        </authorList>
    </citation>
    <scope>SUBCELLULAR LOCATION</scope>
    <source>
        <strain>K12 / MG1655 / ATCC 47076</strain>
    </source>
</reference>
<reference key="16">
    <citation type="journal article" date="2009" name="PLoS Genet.">
        <title>Feedback inhibition in the PhoQ/PhoP signaling system by a membrane peptide.</title>
        <authorList>
            <person name="Lippa A.M."/>
            <person name="Goulian M."/>
        </authorList>
    </citation>
    <scope>ACTIVITY REGULATION</scope>
    <scope>PROBABLE INTERACTION WITH MGRB</scope>
    <source>
        <strain>K12 / MG1655 / ATCC 47076</strain>
    </source>
</reference>
<reference key="17">
    <citation type="journal article" date="2012" name="J. Bacteriol.">
        <title>Perturbation of the oxidizing environment of the periplasm stimulates the PhoQ/PhoP system in Escherichia coli.</title>
        <authorList>
            <person name="Lippa A.M."/>
            <person name="Goulian M."/>
        </authorList>
    </citation>
    <scope>ACTIVITY REGULATION</scope>
    <scope>INDUCTION</scope>
    <source>
        <strain>K12 / MG1655 / ATCC 47076</strain>
    </source>
</reference>
<reference key="18">
    <citation type="journal article" date="2010" name="Proc. Natl. Acad. Sci. U.S.A.">
        <title>Transmembrane polar interactions are required for signaling in the Escherichia coli sensor kinase PhoQ.</title>
        <authorList>
            <person name="Goldberg S.D."/>
            <person name="Clinthorne G.D."/>
            <person name="Goulian M."/>
            <person name="DeGrado W.F."/>
        </authorList>
    </citation>
    <scope>MUTAGENESIS OF VAL-27; LEU-30; LEU-199; ASN-202; LEU-203 AND LEU-205</scope>
    <scope>ROLE OF ASN-202 IN SIGNALING</scope>
    <source>
        <strain>K12 / MG1655 / ATCC 47076</strain>
    </source>
</reference>
<reference key="19">
    <citation type="journal article" date="2001" name="J. Biol. Chem.">
        <title>Structural and mutational analysis of the PhoQ histidine kinase catalytic domain. Insight into the reaction mechanism.</title>
        <authorList>
            <person name="Marina A."/>
            <person name="Mott C."/>
            <person name="Auyzenberg A."/>
            <person name="Hendrickson W.A."/>
            <person name="Waldburger C.D."/>
        </authorList>
    </citation>
    <scope>X-RAY CRYSTALLOGRAPHY (1.6 ANGSTROMS) OF 335-486 IN COMPLEX WITH ATP ANALOG</scope>
    <scope>BIOPHYSICOCHEMICAL PROPERTIES</scope>
    <scope>MG(2+)-BINDING</scope>
    <scope>MUTAGENESIS OF LYS-392; ARG-434 AND ARG-439</scope>
    <source>
        <strain>BL21</strain>
    </source>
</reference>
<reference key="20">
    <citation type="journal article" date="2008" name="J. Biol. Chem.">
        <title>Crystal structure of a functional dimer of the PhoQ sensor domain.</title>
        <authorList>
            <person name="Cheung J."/>
            <person name="Bingman C.A."/>
            <person name="Reyngold M."/>
            <person name="Hendrickson W.A."/>
            <person name="Waldburger C.D."/>
        </authorList>
    </citation>
    <scope>X-RAY CRYSTALLOGRAPHY (2.0 ANGSTROMS) OF 43-190 OF WILD-TYPE IN COMPLEX WITH NICKEL IONS AND MUTANT 148-GLN-ASN-ASN-ASN-ASN-ALA-GLN-154</scope>
    <scope>SUBUNIT</scope>
    <scope>PERIPLASMIC SENSOR DOMAIN</scope>
    <scope>MUTAGENESIS OF ARG-50; GLY-54 AND ASP-179</scope>
    <source>
        <strain>K12 / CSH26</strain>
    </source>
</reference>
<comment type="function">
    <text evidence="1 5">Member of the two-component regulatory system PhoP/PhoQ involved in adaptation to low Mg(2+) environments and the control of acid resistance genes. In low periplasmic Mg(2+), PhoQ functions as a membrane-associated protein kinase that undergoes autophosphorylation and subsequently transfers the phosphate to PhoP, resulting in the expression of PhoP-activated genes (PAG) and repression of PhoP-repressed genes (PRG). In high periplasmic Mg(2+), acts as a protein phosphatase that dephosphorylates phospho-PhoP, resulting in the repression of PAG and may lead to expression of some PRG (By similarity). PhoP-regulated transcription is redox-sensitive, being activated when the periplasm becomes more reducing (deletion of dsbA/dsbB, or treatment with dithiothreitol). MgrB acts between DsbA/DsbB and PhoP/PhoQ in this pathway; the 2 periplasmic Cys residues of MgrB are required for its action on PhoQ, which then acts on PhoP. Mediates magnesium influx to the cytosol by activation of mgtA. Promotes expression of the two-component regulatory system rstA/rstB and transcription of the hemL, mgrB, nagA, slyB, vboR and yrbL genes.</text>
</comment>
<comment type="catalytic activity">
    <reaction>
        <text>ATP + protein L-histidine = ADP + protein N-phospho-L-histidine.</text>
        <dbReference type="EC" id="2.7.13.3"/>
    </reaction>
</comment>
<comment type="activity regulation">
    <text evidence="8 13 15">Acetyl-CoA acts as a non-competitive inhibitor of the PhoQ autokinase activity. Feedback inhibited by MgrB, which seems to bind PhoQ, altering its activity and that of downstream effector PhoP.</text>
</comment>
<comment type="biophysicochemical properties">
    <kinetics>
        <KM evidence="6 8">20.93 uM for ATP (at 22 degrees Celsius and pH 8, in the presence of 50 mM KCl and 1 mM MgCl(2))</KM>
        <KM evidence="6 8">55 uM for ATP (at 22 degrees Celsius and pH 8, in the presence of 25 mM KCl and 0.4 mM MgCl(2))</KM>
    </kinetics>
</comment>
<comment type="subunit">
    <text evidence="6 9 12 17">Homodimer; probably dimerizes via the cytoplasmic domain (Probable). Probably interacts with MgrB in the periplasm, altering its activity and that of downstream effector PhoP.</text>
</comment>
<comment type="interaction">
    <interactant intactId="EBI-1113605">
        <id>P23837</id>
    </interactant>
    <interactant intactId="EBI-1113605">
        <id>P23837</id>
        <label>phoQ</label>
    </interactant>
    <organismsDiffer>false</organismsDiffer>
    <experiments>2</experiments>
</comment>
<comment type="subcellular location">
    <subcellularLocation>
        <location evidence="10">Cell inner membrane</location>
        <topology evidence="10">Multi-pass membrane protein</topology>
    </subcellularLocation>
</comment>
<comment type="induction">
    <text evidence="5 15">The phoP/phoQ operon is positively autoregulated by both PhoP and PhoQ in a Mg(2+)-dependent manner, inhibited at high Mg(2+) concentrations (PubMed:10464230). Induced by dsbA disruption and dithiothreitol (PubMed:22267510).</text>
</comment>
<comment type="miscellaneous">
    <text>There is a close linkage between the PhoP/PhoQ and Rcs signaling systems, and both signaling systems respond to certain external divalent cations (zinc and magnesium).</text>
</comment>
<comment type="miscellaneous">
    <text>Two-component regulatory system EvgA/EvgS interacts with PhoP/PhoQ via signal transduction mediated by phospho-EvgA.</text>
</comment>
<protein>
    <recommendedName>
        <fullName>Sensor protein PhoQ</fullName>
        <ecNumber>2.7.13.3</ecNumber>
        <ecNumber>3.1.3.-</ecNumber>
    </recommendedName>
    <alternativeName>
        <fullName>Sensor histidine protein kinase/phosphatase PhoQ</fullName>
    </alternativeName>
</protein>
<organism>
    <name type="scientific">Escherichia coli (strain K12)</name>
    <dbReference type="NCBI Taxonomy" id="83333"/>
    <lineage>
        <taxon>Bacteria</taxon>
        <taxon>Pseudomonadati</taxon>
        <taxon>Pseudomonadota</taxon>
        <taxon>Gammaproteobacteria</taxon>
        <taxon>Enterobacterales</taxon>
        <taxon>Enterobacteriaceae</taxon>
        <taxon>Escherichia</taxon>
    </lineage>
</organism>
<accession>P23837</accession>
<name>PHOQ_ECOLI</name>
<gene>
    <name type="primary">phoQ</name>
    <name type="ordered locus">b1129</name>
    <name type="ordered locus">JW1115</name>
</gene>
<dbReference type="EC" id="2.7.13.3"/>
<dbReference type="EC" id="3.1.3.-"/>
<dbReference type="EMBL" id="D90393">
    <property type="protein sequence ID" value="BAA14391.1"/>
    <property type="molecule type" value="Genomic_DNA"/>
</dbReference>
<dbReference type="EMBL" id="U00096">
    <property type="protein sequence ID" value="AAC74213.1"/>
    <property type="molecule type" value="Genomic_DNA"/>
</dbReference>
<dbReference type="EMBL" id="AP009048">
    <property type="protein sequence ID" value="BAA35951.1"/>
    <property type="molecule type" value="Genomic_DNA"/>
</dbReference>
<dbReference type="EMBL" id="M81433">
    <property type="status" value="NOT_ANNOTATED_CDS"/>
    <property type="molecule type" value="Genomic_DNA"/>
</dbReference>
<dbReference type="PIR" id="B41966">
    <property type="entry name" value="B41966"/>
</dbReference>
<dbReference type="RefSeq" id="NP_415647.1">
    <property type="nucleotide sequence ID" value="NC_000913.3"/>
</dbReference>
<dbReference type="RefSeq" id="WP_000735412.1">
    <property type="nucleotide sequence ID" value="NZ_STEB01000016.1"/>
</dbReference>
<dbReference type="PDB" id="1ID0">
    <property type="method" value="X-ray"/>
    <property type="resolution" value="1.60 A"/>
    <property type="chains" value="A=335-486"/>
</dbReference>
<dbReference type="PDB" id="3BQ8">
    <property type="method" value="X-ray"/>
    <property type="resolution" value="2.50 A"/>
    <property type="chains" value="A/B=43-190"/>
</dbReference>
<dbReference type="PDB" id="3BQA">
    <property type="method" value="X-ray"/>
    <property type="resolution" value="2.00 A"/>
    <property type="chains" value="A/B=43-190"/>
</dbReference>
<dbReference type="PDB" id="6A8U">
    <property type="method" value="X-ray"/>
    <property type="resolution" value="1.85 A"/>
    <property type="chains" value="A/B=43-190"/>
</dbReference>
<dbReference type="PDB" id="6A8V">
    <property type="method" value="X-ray"/>
    <property type="resolution" value="2.70 A"/>
    <property type="chains" value="A/B=43-190"/>
</dbReference>
<dbReference type="PDBsum" id="1ID0"/>
<dbReference type="PDBsum" id="3BQ8"/>
<dbReference type="PDBsum" id="3BQA"/>
<dbReference type="PDBsum" id="6A8U"/>
<dbReference type="PDBsum" id="6A8V"/>
<dbReference type="SMR" id="P23837"/>
<dbReference type="BioGRID" id="4260662">
    <property type="interactions" value="4"/>
</dbReference>
<dbReference type="DIP" id="DIP-10501N"/>
<dbReference type="FunCoup" id="P23837">
    <property type="interactions" value="211"/>
</dbReference>
<dbReference type="IntAct" id="P23837">
    <property type="interactions" value="2"/>
</dbReference>
<dbReference type="STRING" id="511145.b1129"/>
<dbReference type="DrugBank" id="DB04395">
    <property type="generic name" value="Phosphoaminophosphonic Acid-Adenylate Ester"/>
</dbReference>
<dbReference type="jPOST" id="P23837"/>
<dbReference type="PaxDb" id="511145-b1129"/>
<dbReference type="EnsemblBacteria" id="AAC74213">
    <property type="protein sequence ID" value="AAC74213"/>
    <property type="gene ID" value="b1129"/>
</dbReference>
<dbReference type="GeneID" id="93776281"/>
<dbReference type="GeneID" id="946326"/>
<dbReference type="KEGG" id="ecj:JW1115"/>
<dbReference type="KEGG" id="eco:b1129"/>
<dbReference type="KEGG" id="ecoc:C3026_06795"/>
<dbReference type="PATRIC" id="fig|1411691.4.peg.1137"/>
<dbReference type="EchoBASE" id="EB0725"/>
<dbReference type="eggNOG" id="COG2205">
    <property type="taxonomic scope" value="Bacteria"/>
</dbReference>
<dbReference type="HOGENOM" id="CLU_000445_42_0_6"/>
<dbReference type="InParanoid" id="P23837"/>
<dbReference type="OMA" id="TLVFIYD"/>
<dbReference type="OrthoDB" id="9809567at2"/>
<dbReference type="PhylomeDB" id="P23837"/>
<dbReference type="BioCyc" id="EcoCyc:PHOQ-MONOMER"/>
<dbReference type="BioCyc" id="MetaCyc:PHOQ-MONOMER"/>
<dbReference type="BRENDA" id="2.7.13.3">
    <property type="organism ID" value="2026"/>
</dbReference>
<dbReference type="SABIO-RK" id="P23837"/>
<dbReference type="EvolutionaryTrace" id="P23837"/>
<dbReference type="PHI-base" id="PHI:10954"/>
<dbReference type="PRO" id="PR:P23837"/>
<dbReference type="Proteomes" id="UP000000625">
    <property type="component" value="Chromosome"/>
</dbReference>
<dbReference type="GO" id="GO:0005886">
    <property type="term" value="C:plasma membrane"/>
    <property type="evidence" value="ECO:0000314"/>
    <property type="project" value="EcoCyc"/>
</dbReference>
<dbReference type="GO" id="GO:0005524">
    <property type="term" value="F:ATP binding"/>
    <property type="evidence" value="ECO:0007669"/>
    <property type="project" value="UniProtKB-KW"/>
</dbReference>
<dbReference type="GO" id="GO:0042802">
    <property type="term" value="F:identical protein binding"/>
    <property type="evidence" value="ECO:0000353"/>
    <property type="project" value="IntAct"/>
</dbReference>
<dbReference type="GO" id="GO:0016301">
    <property type="term" value="F:kinase activity"/>
    <property type="evidence" value="ECO:0000314"/>
    <property type="project" value="EcoCyc"/>
</dbReference>
<dbReference type="GO" id="GO:0046872">
    <property type="term" value="F:metal ion binding"/>
    <property type="evidence" value="ECO:0000315"/>
    <property type="project" value="EcoCyc"/>
</dbReference>
<dbReference type="GO" id="GO:0004721">
    <property type="term" value="F:phosphoprotein phosphatase activity"/>
    <property type="evidence" value="ECO:0000314"/>
    <property type="project" value="EcoCyc"/>
</dbReference>
<dbReference type="GO" id="GO:0000155">
    <property type="term" value="F:phosphorelay sensor kinase activity"/>
    <property type="evidence" value="ECO:0000315"/>
    <property type="project" value="EcoCyc"/>
</dbReference>
<dbReference type="GO" id="GO:0010350">
    <property type="term" value="P:cellular response to magnesium starvation"/>
    <property type="evidence" value="ECO:0000315"/>
    <property type="project" value="EcoCyc"/>
</dbReference>
<dbReference type="GO" id="GO:0007234">
    <property type="term" value="P:osmosensory signaling via phosphorelay pathway"/>
    <property type="evidence" value="ECO:0000315"/>
    <property type="project" value="EcoCyc"/>
</dbReference>
<dbReference type="GO" id="GO:0000160">
    <property type="term" value="P:phosphorelay signal transduction system"/>
    <property type="evidence" value="ECO:0000318"/>
    <property type="project" value="GO_Central"/>
</dbReference>
<dbReference type="GO" id="GO:0007165">
    <property type="term" value="P:signal transduction"/>
    <property type="evidence" value="ECO:0000314"/>
    <property type="project" value="EcoCyc"/>
</dbReference>
<dbReference type="CDD" id="cd16954">
    <property type="entry name" value="HATPase_PhoQ-like"/>
    <property type="match status" value="1"/>
</dbReference>
<dbReference type="FunFam" id="1.10.287.130:FF:000013">
    <property type="entry name" value="Sensor histidine kinase PhoQ"/>
    <property type="match status" value="1"/>
</dbReference>
<dbReference type="FunFam" id="3.30.450.140:FF:000001">
    <property type="entry name" value="Virulence sensor histidine kinase PhoQ"/>
    <property type="match status" value="1"/>
</dbReference>
<dbReference type="FunFam" id="3.30.565.10:FF:000019">
    <property type="entry name" value="Virulence sensor histidine kinase PhoQ"/>
    <property type="match status" value="1"/>
</dbReference>
<dbReference type="Gene3D" id="1.10.287.130">
    <property type="match status" value="1"/>
</dbReference>
<dbReference type="Gene3D" id="3.30.450.140">
    <property type="match status" value="1"/>
</dbReference>
<dbReference type="Gene3D" id="3.30.565.10">
    <property type="entry name" value="Histidine kinase-like ATPase, C-terminal domain"/>
    <property type="match status" value="1"/>
</dbReference>
<dbReference type="InterPro" id="IPR003660">
    <property type="entry name" value="HAMP_dom"/>
</dbReference>
<dbReference type="InterPro" id="IPR036890">
    <property type="entry name" value="HATPase_C_sf"/>
</dbReference>
<dbReference type="InterPro" id="IPR005467">
    <property type="entry name" value="His_kinase_dom"/>
</dbReference>
<dbReference type="InterPro" id="IPR036097">
    <property type="entry name" value="HisK_dim/P_sf"/>
</dbReference>
<dbReference type="InterPro" id="IPR015014">
    <property type="entry name" value="PhoQ_Sensor"/>
</dbReference>
<dbReference type="InterPro" id="IPR038429">
    <property type="entry name" value="PhoQ_Sensor_sf"/>
</dbReference>
<dbReference type="InterPro" id="IPR004358">
    <property type="entry name" value="Sig_transdc_His_kin-like_C"/>
</dbReference>
<dbReference type="InterPro" id="IPR050428">
    <property type="entry name" value="TCS_sensor_his_kinase"/>
</dbReference>
<dbReference type="NCBIfam" id="NF008077">
    <property type="entry name" value="PRK10815.1"/>
    <property type="match status" value="1"/>
</dbReference>
<dbReference type="PANTHER" id="PTHR45436">
    <property type="entry name" value="SENSOR HISTIDINE KINASE YKOH"/>
    <property type="match status" value="1"/>
</dbReference>
<dbReference type="PANTHER" id="PTHR45436:SF4">
    <property type="entry name" value="SENSOR PROTEIN PHOQ"/>
    <property type="match status" value="1"/>
</dbReference>
<dbReference type="Pfam" id="PF02518">
    <property type="entry name" value="HATPase_c"/>
    <property type="match status" value="1"/>
</dbReference>
<dbReference type="Pfam" id="PF08918">
    <property type="entry name" value="PhoQ_Sensor"/>
    <property type="match status" value="1"/>
</dbReference>
<dbReference type="PRINTS" id="PR00344">
    <property type="entry name" value="BCTRLSENSOR"/>
</dbReference>
<dbReference type="SMART" id="SM00387">
    <property type="entry name" value="HATPase_c"/>
    <property type="match status" value="1"/>
</dbReference>
<dbReference type="SUPFAM" id="SSF55874">
    <property type="entry name" value="ATPase domain of HSP90 chaperone/DNA topoisomerase II/histidine kinase"/>
    <property type="match status" value="1"/>
</dbReference>
<dbReference type="SUPFAM" id="SSF47384">
    <property type="entry name" value="Homodimeric domain of signal transducing histidine kinase"/>
    <property type="match status" value="1"/>
</dbReference>
<dbReference type="PROSITE" id="PS50885">
    <property type="entry name" value="HAMP"/>
    <property type="match status" value="1"/>
</dbReference>
<dbReference type="PROSITE" id="PS50109">
    <property type="entry name" value="HIS_KIN"/>
    <property type="match status" value="1"/>
</dbReference>
<proteinExistence type="evidence at protein level"/>